<accession>O07553</accession>
<reference key="1">
    <citation type="journal article" date="1998" name="Microbiology">
        <title>The 172 kb prkA-addAB region from 83 degrees to 97 degrees of the Bacillus subtilis chromosome contains several dysfunctional genes, the glyB marker, many genes encoding transporter proteins, and the ubiquitous hit gene.</title>
        <authorList>
            <person name="Noback M.A."/>
            <person name="Holsappel S."/>
            <person name="Kiewiet R."/>
            <person name="Terpstra P."/>
            <person name="Wambutt R."/>
            <person name="Wedler H."/>
            <person name="Venema G."/>
            <person name="Bron S."/>
        </authorList>
    </citation>
    <scope>NUCLEOTIDE SEQUENCE [GENOMIC DNA]</scope>
    <source>
        <strain>168</strain>
    </source>
</reference>
<reference key="2">
    <citation type="journal article" date="1997" name="Nature">
        <title>The complete genome sequence of the Gram-positive bacterium Bacillus subtilis.</title>
        <authorList>
            <person name="Kunst F."/>
            <person name="Ogasawara N."/>
            <person name="Moszer I."/>
            <person name="Albertini A.M."/>
            <person name="Alloni G."/>
            <person name="Azevedo V."/>
            <person name="Bertero M.G."/>
            <person name="Bessieres P."/>
            <person name="Bolotin A."/>
            <person name="Borchert S."/>
            <person name="Borriss R."/>
            <person name="Boursier L."/>
            <person name="Brans A."/>
            <person name="Braun M."/>
            <person name="Brignell S.C."/>
            <person name="Bron S."/>
            <person name="Brouillet S."/>
            <person name="Bruschi C.V."/>
            <person name="Caldwell B."/>
            <person name="Capuano V."/>
            <person name="Carter N.M."/>
            <person name="Choi S.-K."/>
            <person name="Codani J.-J."/>
            <person name="Connerton I.F."/>
            <person name="Cummings N.J."/>
            <person name="Daniel R.A."/>
            <person name="Denizot F."/>
            <person name="Devine K.M."/>
            <person name="Duesterhoeft A."/>
            <person name="Ehrlich S.D."/>
            <person name="Emmerson P.T."/>
            <person name="Entian K.-D."/>
            <person name="Errington J."/>
            <person name="Fabret C."/>
            <person name="Ferrari E."/>
            <person name="Foulger D."/>
            <person name="Fritz C."/>
            <person name="Fujita M."/>
            <person name="Fujita Y."/>
            <person name="Fuma S."/>
            <person name="Galizzi A."/>
            <person name="Galleron N."/>
            <person name="Ghim S.-Y."/>
            <person name="Glaser P."/>
            <person name="Goffeau A."/>
            <person name="Golightly E.J."/>
            <person name="Grandi G."/>
            <person name="Guiseppi G."/>
            <person name="Guy B.J."/>
            <person name="Haga K."/>
            <person name="Haiech J."/>
            <person name="Harwood C.R."/>
            <person name="Henaut A."/>
            <person name="Hilbert H."/>
            <person name="Holsappel S."/>
            <person name="Hosono S."/>
            <person name="Hullo M.-F."/>
            <person name="Itaya M."/>
            <person name="Jones L.-M."/>
            <person name="Joris B."/>
            <person name="Karamata D."/>
            <person name="Kasahara Y."/>
            <person name="Klaerr-Blanchard M."/>
            <person name="Klein C."/>
            <person name="Kobayashi Y."/>
            <person name="Koetter P."/>
            <person name="Koningstein G."/>
            <person name="Krogh S."/>
            <person name="Kumano M."/>
            <person name="Kurita K."/>
            <person name="Lapidus A."/>
            <person name="Lardinois S."/>
            <person name="Lauber J."/>
            <person name="Lazarevic V."/>
            <person name="Lee S.-M."/>
            <person name="Levine A."/>
            <person name="Liu H."/>
            <person name="Masuda S."/>
            <person name="Mauel C."/>
            <person name="Medigue C."/>
            <person name="Medina N."/>
            <person name="Mellado R.P."/>
            <person name="Mizuno M."/>
            <person name="Moestl D."/>
            <person name="Nakai S."/>
            <person name="Noback M."/>
            <person name="Noone D."/>
            <person name="O'Reilly M."/>
            <person name="Ogawa K."/>
            <person name="Ogiwara A."/>
            <person name="Oudega B."/>
            <person name="Park S.-H."/>
            <person name="Parro V."/>
            <person name="Pohl T.M."/>
            <person name="Portetelle D."/>
            <person name="Porwollik S."/>
            <person name="Prescott A.M."/>
            <person name="Presecan E."/>
            <person name="Pujic P."/>
            <person name="Purnelle B."/>
            <person name="Rapoport G."/>
            <person name="Rey M."/>
            <person name="Reynolds S."/>
            <person name="Rieger M."/>
            <person name="Rivolta C."/>
            <person name="Rocha E."/>
            <person name="Roche B."/>
            <person name="Rose M."/>
            <person name="Sadaie Y."/>
            <person name="Sato T."/>
            <person name="Scanlan E."/>
            <person name="Schleich S."/>
            <person name="Schroeter R."/>
            <person name="Scoffone F."/>
            <person name="Sekiguchi J."/>
            <person name="Sekowska A."/>
            <person name="Seror S.J."/>
            <person name="Serror P."/>
            <person name="Shin B.-S."/>
            <person name="Soldo B."/>
            <person name="Sorokin A."/>
            <person name="Tacconi E."/>
            <person name="Takagi T."/>
            <person name="Takahashi H."/>
            <person name="Takemaru K."/>
            <person name="Takeuchi M."/>
            <person name="Tamakoshi A."/>
            <person name="Tanaka T."/>
            <person name="Terpstra P."/>
            <person name="Tognoni A."/>
            <person name="Tosato V."/>
            <person name="Uchiyama S."/>
            <person name="Vandenbol M."/>
            <person name="Vannier F."/>
            <person name="Vassarotti A."/>
            <person name="Viari A."/>
            <person name="Wambutt R."/>
            <person name="Wedler E."/>
            <person name="Wedler H."/>
            <person name="Weitzenegger T."/>
            <person name="Winters P."/>
            <person name="Wipat A."/>
            <person name="Yamamoto H."/>
            <person name="Yamane K."/>
            <person name="Yasumoto K."/>
            <person name="Yata K."/>
            <person name="Yoshida K."/>
            <person name="Yoshikawa H.-F."/>
            <person name="Zumstein E."/>
            <person name="Yoshikawa H."/>
            <person name="Danchin A."/>
        </authorList>
    </citation>
    <scope>NUCLEOTIDE SEQUENCE [LARGE SCALE GENOMIC DNA]</scope>
    <source>
        <strain>168</strain>
    </source>
</reference>
<reference key="3">
    <citation type="journal article" date="2000" name="J. Bacteriol.">
        <title>Two types of Bacillus subtilis tetA(L) deletion strains reveal the physiological importance of TetA(L) in K(+) acquisition as well as in Na(+), alkali, and tetracycline resistance.</title>
        <authorList>
            <person name="Wang W."/>
            <person name="Guffanti A.A."/>
            <person name="Wei Y."/>
            <person name="Ito M."/>
            <person name="Krulwich T.A."/>
        </authorList>
    </citation>
    <scope>INVOLVEMENT IN SODIUM UPTAKE</scope>
</reference>
<reference key="4">
    <citation type="journal article" date="2000" name="J. Biol. Chem.">
        <title>Bacillus subtilis YqkI is a novel malic/Na+-lactate antiporter that enhances growth on malate at low protonmotive force.</title>
        <authorList>
            <person name="Wei Y."/>
            <person name="Guffanti A.A."/>
            <person name="Ito M."/>
            <person name="Krulwich T.A."/>
        </authorList>
    </citation>
    <scope>CHARACTERIZATION</scope>
</reference>
<reference key="5">
    <citation type="journal article" date="2001" name="J. Bacteriol.">
        <title>Bacillus subtilis NhaC, an Na+/H+ antiporter, influences expression of the phoPR operon and production of alkaline phosphatases.</title>
        <authorList>
            <person name="Pragai Z."/>
            <person name="Eschevins C."/>
            <person name="Bron S."/>
            <person name="Harwood C.R."/>
        </authorList>
    </citation>
    <scope>CHARACTERIZATION</scope>
</reference>
<gene>
    <name type="primary">nhaC</name>
    <name type="synonym">yheL</name>
    <name type="ordered locus">BSU09680</name>
</gene>
<protein>
    <recommendedName>
        <fullName>Na(+)/H(+) antiporter NhaC</fullName>
    </recommendedName>
    <alternativeName>
        <fullName>Sodium/hydrogen antiporter</fullName>
    </alternativeName>
    <alternativeName>
        <fullName>Sodium/proton antiporter</fullName>
    </alternativeName>
</protein>
<organism>
    <name type="scientific">Bacillus subtilis (strain 168)</name>
    <dbReference type="NCBI Taxonomy" id="224308"/>
    <lineage>
        <taxon>Bacteria</taxon>
        <taxon>Bacillati</taxon>
        <taxon>Bacillota</taxon>
        <taxon>Bacilli</taxon>
        <taxon>Bacillales</taxon>
        <taxon>Bacillaceae</taxon>
        <taxon>Bacillus</taxon>
    </lineage>
</organism>
<sequence>MDSQKKLTFPLAVGLFIFMLCIIISCLFLLHVEPHIPLFLSVVMLSAAALWFGFPWKSIEKGIVDGIKNGVQPIIVLALIGILIGAWMYSGAIPTMTVYALSFIEPSHLLLTALFSCMIISTLVGSSLTTVSTIGVALIGVASAAGVPLEWTAGAVICGACFGDKMSPMSDTTNFAAGIGEIPIFEHIRHMMGTTIPALLITVVLFYFLGSSVSADAASTDNIQQVITGIKDAANVTPWALLSPLLVVLLAMKRVSVIPVLTAGIISSGILTAIFVPYSSLQAFMTALQNGTTFETDNEAAAKIINRGGLQSMMGSVSLIMIAFALGGLMEKIGLISALLEGVMKGIRSKGRLVAATVCSSIGVNLATGEQYLSILIPGQSFKSLYDKRNIQRKFLTRSLEDGGTLINPLIPWGVSGAFMASALGVPVIDYIPFTFFLYISPMISILIGFVKK</sequence>
<evidence type="ECO:0000255" key="1"/>
<evidence type="ECO:0000305" key="2"/>
<keyword id="KW-0050">Antiport</keyword>
<keyword id="KW-1003">Cell membrane</keyword>
<keyword id="KW-0406">Ion transport</keyword>
<keyword id="KW-0472">Membrane</keyword>
<keyword id="KW-1185">Reference proteome</keyword>
<keyword id="KW-0915">Sodium</keyword>
<keyword id="KW-0739">Sodium transport</keyword>
<keyword id="KW-0812">Transmembrane</keyword>
<keyword id="KW-1133">Transmembrane helix</keyword>
<keyword id="KW-0813">Transport</keyword>
<dbReference type="EMBL" id="Y14080">
    <property type="protein sequence ID" value="CAA74461.1"/>
    <property type="molecule type" value="Genomic_DNA"/>
</dbReference>
<dbReference type="EMBL" id="AL009126">
    <property type="protein sequence ID" value="CAB12807.1"/>
    <property type="molecule type" value="Genomic_DNA"/>
</dbReference>
<dbReference type="PIR" id="D69829">
    <property type="entry name" value="D69829"/>
</dbReference>
<dbReference type="RefSeq" id="NP_388849.1">
    <property type="nucleotide sequence ID" value="NC_000964.3"/>
</dbReference>
<dbReference type="RefSeq" id="WP_003233301.1">
    <property type="nucleotide sequence ID" value="NZ_OZ025638.1"/>
</dbReference>
<dbReference type="SMR" id="O07553"/>
<dbReference type="FunCoup" id="O07553">
    <property type="interactions" value="29"/>
</dbReference>
<dbReference type="STRING" id="224308.BSU09680"/>
<dbReference type="TCDB" id="2.A.35.1.6">
    <property type="family name" value="the nhac na(+):h(+) antiporter (nhac) family"/>
</dbReference>
<dbReference type="PaxDb" id="224308-BSU09680"/>
<dbReference type="EnsemblBacteria" id="CAB12807">
    <property type="protein sequence ID" value="CAB12807"/>
    <property type="gene ID" value="BSU_09680"/>
</dbReference>
<dbReference type="GeneID" id="936274"/>
<dbReference type="KEGG" id="bsu:BSU09680"/>
<dbReference type="PATRIC" id="fig|224308.179.peg.1041"/>
<dbReference type="eggNOG" id="COG1757">
    <property type="taxonomic scope" value="Bacteria"/>
</dbReference>
<dbReference type="InParanoid" id="O07553"/>
<dbReference type="OrthoDB" id="9762978at2"/>
<dbReference type="PhylomeDB" id="O07553"/>
<dbReference type="BioCyc" id="BSUB:BSU09680-MONOMER"/>
<dbReference type="Proteomes" id="UP000001570">
    <property type="component" value="Chromosome"/>
</dbReference>
<dbReference type="GO" id="GO:0005886">
    <property type="term" value="C:plasma membrane"/>
    <property type="evidence" value="ECO:0007669"/>
    <property type="project" value="UniProtKB-SubCell"/>
</dbReference>
<dbReference type="GO" id="GO:0015385">
    <property type="term" value="F:sodium:proton antiporter activity"/>
    <property type="evidence" value="ECO:0000318"/>
    <property type="project" value="GO_Central"/>
</dbReference>
<dbReference type="InterPro" id="IPR004770">
    <property type="entry name" value="Na/H_antiport_NhaC"/>
</dbReference>
<dbReference type="InterPro" id="IPR018461">
    <property type="entry name" value="Na/H_Antiport_NhaC-like_C"/>
</dbReference>
<dbReference type="InterPro" id="IPR052180">
    <property type="entry name" value="NhaC_Na-H+_Antiporter"/>
</dbReference>
<dbReference type="NCBIfam" id="TIGR00931">
    <property type="entry name" value="antiport_nhaC"/>
    <property type="match status" value="1"/>
</dbReference>
<dbReference type="PANTHER" id="PTHR33451">
    <property type="entry name" value="MALATE-2H(+)/NA(+)-LACTATE ANTIPORTER"/>
    <property type="match status" value="1"/>
</dbReference>
<dbReference type="PANTHER" id="PTHR33451:SF6">
    <property type="entry name" value="NA(+)_H(+) ANTIPORTER NHAC"/>
    <property type="match status" value="1"/>
</dbReference>
<dbReference type="Pfam" id="PF03553">
    <property type="entry name" value="Na_H_antiporter"/>
    <property type="match status" value="1"/>
</dbReference>
<comment type="function">
    <text>Is a secondary, electrogenic Na(+)/H(+) antiporter that catalyzes Na(+) uptake and proton efflux. Makes modest contributions to pH homeostasis in the alkaline range of pH but is not contributor to Na(+) resistance. Appears to have a repressive effect on growth and on alkaline phosphatases production in the presence of sodium, by affecting the transcription of the phoP/phoR two-component regulatory system.</text>
</comment>
<comment type="activity regulation">
    <text>The antiport activity is markedly inhibited by both valinomycin and CCCP, and modestly by nigericin.</text>
</comment>
<comment type="subcellular location">
    <subcellularLocation>
        <location>Cell membrane</location>
        <topology>Multi-pass membrane protein</topology>
    </subcellularLocation>
</comment>
<comment type="similarity">
    <text evidence="2">Belongs to the NhaC Na(+)/H(+) (TC 2.A.35) antiporter family.</text>
</comment>
<name>NHAC_BACSU</name>
<feature type="chain" id="PRO_0000052416" description="Na(+)/H(+) antiporter NhaC">
    <location>
        <begin position="1"/>
        <end position="453"/>
    </location>
</feature>
<feature type="transmembrane region" description="Helical" evidence="1">
    <location>
        <begin position="9"/>
        <end position="29"/>
    </location>
</feature>
<feature type="transmembrane region" description="Helical" evidence="1">
    <location>
        <begin position="36"/>
        <end position="56"/>
    </location>
</feature>
<feature type="transmembrane region" description="Helical" evidence="1">
    <location>
        <begin position="71"/>
        <end position="91"/>
    </location>
</feature>
<feature type="transmembrane region" description="Helical" evidence="1">
    <location>
        <begin position="109"/>
        <end position="129"/>
    </location>
</feature>
<feature type="transmembrane region" description="Helical" evidence="1">
    <location>
        <begin position="137"/>
        <end position="157"/>
    </location>
</feature>
<feature type="transmembrane region" description="Helical" evidence="1">
    <location>
        <begin position="193"/>
        <end position="215"/>
    </location>
</feature>
<feature type="transmembrane region" description="Helical" evidence="1">
    <location>
        <begin position="257"/>
        <end position="277"/>
    </location>
</feature>
<feature type="transmembrane region" description="Helical" evidence="1">
    <location>
        <begin position="320"/>
        <end position="340"/>
    </location>
</feature>
<feature type="transmembrane region" description="Helical" evidence="1">
    <location>
        <begin position="353"/>
        <end position="375"/>
    </location>
</feature>
<feature type="transmembrane region" description="Helical" evidence="1">
    <location>
        <begin position="429"/>
        <end position="451"/>
    </location>
</feature>
<proteinExistence type="evidence at protein level"/>